<gene>
    <name type="primary">snf21</name>
    <name type="ORF">SPAC1250.01</name>
    <name type="ORF">SPAC29A4.21</name>
</gene>
<keyword id="KW-0067">ATP-binding</keyword>
<keyword id="KW-0103">Bromodomain</keyword>
<keyword id="KW-0156">Chromatin regulator</keyword>
<keyword id="KW-0347">Helicase</keyword>
<keyword id="KW-0378">Hydrolase</keyword>
<keyword id="KW-0547">Nucleotide-binding</keyword>
<keyword id="KW-0539">Nucleus</keyword>
<keyword id="KW-1185">Reference proteome</keyword>
<organism>
    <name type="scientific">Schizosaccharomyces pombe (strain 972 / ATCC 24843)</name>
    <name type="common">Fission yeast</name>
    <dbReference type="NCBI Taxonomy" id="284812"/>
    <lineage>
        <taxon>Eukaryota</taxon>
        <taxon>Fungi</taxon>
        <taxon>Dikarya</taxon>
        <taxon>Ascomycota</taxon>
        <taxon>Taphrinomycotina</taxon>
        <taxon>Schizosaccharomycetes</taxon>
        <taxon>Schizosaccharomycetales</taxon>
        <taxon>Schizosaccharomycetaceae</taxon>
        <taxon>Schizosaccharomyces</taxon>
    </lineage>
</organism>
<protein>
    <recommendedName>
        <fullName>Chromatin structure-remodeling complex subunit snf21</fullName>
        <ecNumber>3.6.4.-</ecNumber>
    </recommendedName>
    <alternativeName>
        <fullName>ATP-dependent helicase snf21</fullName>
    </alternativeName>
    <alternativeName>
        <fullName>RSC complex subunit snf21</fullName>
    </alternativeName>
</protein>
<proteinExistence type="evidence at protein level"/>
<feature type="chain" id="PRO_0000074359" description="Chromatin structure-remodeling complex subunit snf21">
    <location>
        <begin position="1"/>
        <end position="1199"/>
    </location>
</feature>
<feature type="domain" description="HSA" evidence="5">
    <location>
        <begin position="256"/>
        <end position="328"/>
    </location>
</feature>
<feature type="domain" description="Helicase ATP-binding" evidence="3">
    <location>
        <begin position="429"/>
        <end position="594"/>
    </location>
</feature>
<feature type="domain" description="Helicase C-terminal" evidence="4">
    <location>
        <begin position="740"/>
        <end position="903"/>
    </location>
</feature>
<feature type="domain" description="Bromo" evidence="2">
    <location>
        <begin position="1061"/>
        <end position="1171"/>
    </location>
</feature>
<feature type="region of interest" description="Disordered" evidence="6">
    <location>
        <begin position="1017"/>
        <end position="1059"/>
    </location>
</feature>
<feature type="short sequence motif" description="DEGH box">
    <location>
        <begin position="544"/>
        <end position="547"/>
    </location>
</feature>
<feature type="binding site" evidence="3">
    <location>
        <begin position="442"/>
        <end position="449"/>
    </location>
    <ligand>
        <name>ATP</name>
        <dbReference type="ChEBI" id="CHEBI:30616"/>
    </ligand>
</feature>
<comment type="function">
    <text evidence="7 9">Helicase. Component of the chromatin structure remodeling complex (RSC), which is involved in transcription regulation and nucleosome positioning. Controls particularly membrane and organelle development genes.</text>
</comment>
<comment type="subunit">
    <text evidence="1">Component of the RSC complex composed of at least arp9, arp42, rsc1, rsc4, rsc7, rsc9, rsc58, sfh1, snf21, ssr1, ssr2, ssr3 and ssr4. The complex interacts with histone and histone variant components of centromeric chromatin (By similarity).</text>
</comment>
<comment type="subcellular location">
    <subcellularLocation>
        <location evidence="5 8">Nucleus</location>
    </subcellularLocation>
    <text evidence="1">Localizes to centromeric and flanking chromatin.</text>
</comment>
<comment type="similarity">
    <text evidence="10">Belongs to the SNF2/RAD54 helicase family.</text>
</comment>
<evidence type="ECO:0000250" key="1"/>
<evidence type="ECO:0000255" key="2">
    <source>
        <dbReference type="PROSITE-ProRule" id="PRU00035"/>
    </source>
</evidence>
<evidence type="ECO:0000255" key="3">
    <source>
        <dbReference type="PROSITE-ProRule" id="PRU00541"/>
    </source>
</evidence>
<evidence type="ECO:0000255" key="4">
    <source>
        <dbReference type="PROSITE-ProRule" id="PRU00542"/>
    </source>
</evidence>
<evidence type="ECO:0000255" key="5">
    <source>
        <dbReference type="PROSITE-ProRule" id="PRU00549"/>
    </source>
</evidence>
<evidence type="ECO:0000256" key="6">
    <source>
        <dbReference type="SAM" id="MobiDB-lite"/>
    </source>
</evidence>
<evidence type="ECO:0000269" key="7">
    <source>
    </source>
</evidence>
<evidence type="ECO:0000269" key="8">
    <source>
    </source>
</evidence>
<evidence type="ECO:0000269" key="9">
    <source>
    </source>
</evidence>
<evidence type="ECO:0000305" key="10"/>
<accession>Q9UTN6</accession>
<accession>O14024</accession>
<dbReference type="EC" id="3.6.4.-"/>
<dbReference type="EMBL" id="AB162438">
    <property type="protein sequence ID" value="BAD11105.1"/>
    <property type="molecule type" value="Genomic_DNA"/>
</dbReference>
<dbReference type="EMBL" id="CU329670">
    <property type="protein sequence ID" value="CAB54824.1"/>
    <property type="molecule type" value="Genomic_DNA"/>
</dbReference>
<dbReference type="PIR" id="T37561">
    <property type="entry name" value="T37561"/>
</dbReference>
<dbReference type="RefSeq" id="NP_594861.1">
    <property type="nucleotide sequence ID" value="NM_001020290.2"/>
</dbReference>
<dbReference type="SMR" id="Q9UTN6"/>
<dbReference type="BioGRID" id="279092">
    <property type="interactions" value="24"/>
</dbReference>
<dbReference type="ComplexPortal" id="CPX-6363">
    <property type="entry name" value="RSC chromatin remodelling complex"/>
</dbReference>
<dbReference type="DIP" id="DIP-48388N"/>
<dbReference type="FunCoup" id="Q9UTN6">
    <property type="interactions" value="892"/>
</dbReference>
<dbReference type="IntAct" id="Q9UTN6">
    <property type="interactions" value="12"/>
</dbReference>
<dbReference type="STRING" id="284812.Q9UTN6"/>
<dbReference type="iPTMnet" id="Q9UTN6"/>
<dbReference type="PaxDb" id="4896-SPAC1250.01.1"/>
<dbReference type="EnsemblFungi" id="SPAC1250.01.1">
    <property type="protein sequence ID" value="SPAC1250.01.1:pep"/>
    <property type="gene ID" value="SPAC1250.01"/>
</dbReference>
<dbReference type="GeneID" id="2542638"/>
<dbReference type="KEGG" id="spo:2542638"/>
<dbReference type="PomBase" id="SPAC1250.01">
    <property type="gene designation" value="snf21"/>
</dbReference>
<dbReference type="VEuPathDB" id="FungiDB:SPAC1250.01"/>
<dbReference type="eggNOG" id="KOG0386">
    <property type="taxonomic scope" value="Eukaryota"/>
</dbReference>
<dbReference type="HOGENOM" id="CLU_000315_15_3_1"/>
<dbReference type="InParanoid" id="Q9UTN6"/>
<dbReference type="OMA" id="VNYISHT"/>
<dbReference type="PhylomeDB" id="Q9UTN6"/>
<dbReference type="Reactome" id="R-SPO-3214858">
    <property type="pathway name" value="RMTs methylate histone arginines"/>
</dbReference>
<dbReference type="PRO" id="PR:Q9UTN6"/>
<dbReference type="Proteomes" id="UP000002485">
    <property type="component" value="Chromosome I"/>
</dbReference>
<dbReference type="GO" id="GO:0000785">
    <property type="term" value="C:chromatin"/>
    <property type="evidence" value="ECO:0000318"/>
    <property type="project" value="GO_Central"/>
</dbReference>
<dbReference type="GO" id="GO:0005634">
    <property type="term" value="C:nucleus"/>
    <property type="evidence" value="ECO:0000314"/>
    <property type="project" value="PomBase"/>
</dbReference>
<dbReference type="GO" id="GO:0016586">
    <property type="term" value="C:RSC-type complex"/>
    <property type="evidence" value="ECO:0000314"/>
    <property type="project" value="PomBase"/>
</dbReference>
<dbReference type="GO" id="GO:0005524">
    <property type="term" value="F:ATP binding"/>
    <property type="evidence" value="ECO:0007669"/>
    <property type="project" value="UniProtKB-KW"/>
</dbReference>
<dbReference type="GO" id="GO:0016887">
    <property type="term" value="F:ATP hydrolysis activity"/>
    <property type="evidence" value="ECO:0000305"/>
    <property type="project" value="PomBase"/>
</dbReference>
<dbReference type="GO" id="GO:0003682">
    <property type="term" value="F:chromatin binding"/>
    <property type="evidence" value="ECO:0000318"/>
    <property type="project" value="GO_Central"/>
</dbReference>
<dbReference type="GO" id="GO:0140463">
    <property type="term" value="F:chromatin-protein adaptor activity"/>
    <property type="evidence" value="ECO:0000269"/>
    <property type="project" value="PomBase"/>
</dbReference>
<dbReference type="GO" id="GO:0003677">
    <property type="term" value="F:DNA binding"/>
    <property type="evidence" value="ECO:0000318"/>
    <property type="project" value="GO_Central"/>
</dbReference>
<dbReference type="GO" id="GO:0004386">
    <property type="term" value="F:helicase activity"/>
    <property type="evidence" value="ECO:0007669"/>
    <property type="project" value="UniProtKB-KW"/>
</dbReference>
<dbReference type="GO" id="GO:0042393">
    <property type="term" value="F:histone binding"/>
    <property type="evidence" value="ECO:0007669"/>
    <property type="project" value="InterPro"/>
</dbReference>
<dbReference type="GO" id="GO:0140751">
    <property type="term" value="F:histone octamer slider activity"/>
    <property type="evidence" value="ECO:0000315"/>
    <property type="project" value="PomBase"/>
</dbReference>
<dbReference type="GO" id="GO:0140750">
    <property type="term" value="F:nucleosome array spacer activity"/>
    <property type="evidence" value="ECO:0000318"/>
    <property type="project" value="GO_Central"/>
</dbReference>
<dbReference type="GO" id="GO:0006338">
    <property type="term" value="P:chromatin remodeling"/>
    <property type="evidence" value="ECO:0000303"/>
    <property type="project" value="ComplexPortal"/>
</dbReference>
<dbReference type="GO" id="GO:0033696">
    <property type="term" value="P:heterochromatin boundary formation"/>
    <property type="evidence" value="ECO:0000315"/>
    <property type="project" value="PomBase"/>
</dbReference>
<dbReference type="GO" id="GO:0007064">
    <property type="term" value="P:mitotic sister chromatid cohesion"/>
    <property type="evidence" value="ECO:0000315"/>
    <property type="project" value="PomBase"/>
</dbReference>
<dbReference type="GO" id="GO:0045944">
    <property type="term" value="P:positive regulation of transcription by RNA polymerase II"/>
    <property type="evidence" value="ECO:0000314"/>
    <property type="project" value="PomBase"/>
</dbReference>
<dbReference type="GO" id="GO:0045815">
    <property type="term" value="P:transcription initiation-coupled chromatin remodeling"/>
    <property type="evidence" value="ECO:0000305"/>
    <property type="project" value="PomBase"/>
</dbReference>
<dbReference type="CDD" id="cd05519">
    <property type="entry name" value="Bromo_SNF2"/>
    <property type="match status" value="1"/>
</dbReference>
<dbReference type="CDD" id="cd17996">
    <property type="entry name" value="DEXHc_SMARCA2_SMARCA4"/>
    <property type="match status" value="1"/>
</dbReference>
<dbReference type="CDD" id="cd18793">
    <property type="entry name" value="SF2_C_SNF"/>
    <property type="match status" value="1"/>
</dbReference>
<dbReference type="FunFam" id="3.40.50.10810:FF:000008">
    <property type="entry name" value="Chromatin structure-remodeling complex subunit snf21"/>
    <property type="match status" value="1"/>
</dbReference>
<dbReference type="FunFam" id="3.40.50.300:FF:000843">
    <property type="entry name" value="Chromatin structure-remodeling complex subunit snf21"/>
    <property type="match status" value="1"/>
</dbReference>
<dbReference type="FunFam" id="1.20.920.10:FF:000065">
    <property type="entry name" value="Transcription regulatory protein SNF2"/>
    <property type="match status" value="1"/>
</dbReference>
<dbReference type="Gene3D" id="1.20.5.170">
    <property type="match status" value="1"/>
</dbReference>
<dbReference type="Gene3D" id="1.20.920.10">
    <property type="entry name" value="Bromodomain-like"/>
    <property type="match status" value="1"/>
</dbReference>
<dbReference type="Gene3D" id="3.40.50.300">
    <property type="entry name" value="P-loop containing nucleotide triphosphate hydrolases"/>
    <property type="match status" value="1"/>
</dbReference>
<dbReference type="Gene3D" id="3.40.50.10810">
    <property type="entry name" value="Tandem AAA-ATPase domain"/>
    <property type="match status" value="1"/>
</dbReference>
<dbReference type="InterPro" id="IPR001487">
    <property type="entry name" value="Bromodomain"/>
</dbReference>
<dbReference type="InterPro" id="IPR036427">
    <property type="entry name" value="Bromodomain-like_sf"/>
</dbReference>
<dbReference type="InterPro" id="IPR018359">
    <property type="entry name" value="Bromodomain_CS"/>
</dbReference>
<dbReference type="InterPro" id="IPR014001">
    <property type="entry name" value="Helicase_ATP-bd"/>
</dbReference>
<dbReference type="InterPro" id="IPR001650">
    <property type="entry name" value="Helicase_C-like"/>
</dbReference>
<dbReference type="InterPro" id="IPR014012">
    <property type="entry name" value="HSA_dom"/>
</dbReference>
<dbReference type="InterPro" id="IPR027417">
    <property type="entry name" value="P-loop_NTPase"/>
</dbReference>
<dbReference type="InterPro" id="IPR029295">
    <property type="entry name" value="SnAC"/>
</dbReference>
<dbReference type="InterPro" id="IPR038718">
    <property type="entry name" value="SNF2-like_sf"/>
</dbReference>
<dbReference type="InterPro" id="IPR049730">
    <property type="entry name" value="SNF2/RAD54-like_C"/>
</dbReference>
<dbReference type="InterPro" id="IPR000330">
    <property type="entry name" value="SNF2_N"/>
</dbReference>
<dbReference type="PANTHER" id="PTHR10799">
    <property type="entry name" value="SNF2/RAD54 HELICASE FAMILY"/>
    <property type="match status" value="1"/>
</dbReference>
<dbReference type="Pfam" id="PF00439">
    <property type="entry name" value="Bromodomain"/>
    <property type="match status" value="1"/>
</dbReference>
<dbReference type="Pfam" id="PF00271">
    <property type="entry name" value="Helicase_C"/>
    <property type="match status" value="1"/>
</dbReference>
<dbReference type="Pfam" id="PF07529">
    <property type="entry name" value="HSA"/>
    <property type="match status" value="1"/>
</dbReference>
<dbReference type="Pfam" id="PF14619">
    <property type="entry name" value="SnAC"/>
    <property type="match status" value="1"/>
</dbReference>
<dbReference type="Pfam" id="PF00176">
    <property type="entry name" value="SNF2-rel_dom"/>
    <property type="match status" value="1"/>
</dbReference>
<dbReference type="PRINTS" id="PR00503">
    <property type="entry name" value="BROMODOMAIN"/>
</dbReference>
<dbReference type="SMART" id="SM00297">
    <property type="entry name" value="BROMO"/>
    <property type="match status" value="1"/>
</dbReference>
<dbReference type="SMART" id="SM00487">
    <property type="entry name" value="DEXDc"/>
    <property type="match status" value="1"/>
</dbReference>
<dbReference type="SMART" id="SM00490">
    <property type="entry name" value="HELICc"/>
    <property type="match status" value="1"/>
</dbReference>
<dbReference type="SMART" id="SM00573">
    <property type="entry name" value="HSA"/>
    <property type="match status" value="1"/>
</dbReference>
<dbReference type="SMART" id="SM01314">
    <property type="entry name" value="SnAC"/>
    <property type="match status" value="1"/>
</dbReference>
<dbReference type="SUPFAM" id="SSF47370">
    <property type="entry name" value="Bromodomain"/>
    <property type="match status" value="1"/>
</dbReference>
<dbReference type="SUPFAM" id="SSF52540">
    <property type="entry name" value="P-loop containing nucleoside triphosphate hydrolases"/>
    <property type="match status" value="2"/>
</dbReference>
<dbReference type="PROSITE" id="PS00633">
    <property type="entry name" value="BROMODOMAIN_1"/>
    <property type="match status" value="1"/>
</dbReference>
<dbReference type="PROSITE" id="PS50014">
    <property type="entry name" value="BROMODOMAIN_2"/>
    <property type="match status" value="1"/>
</dbReference>
<dbReference type="PROSITE" id="PS51192">
    <property type="entry name" value="HELICASE_ATP_BIND_1"/>
    <property type="match status" value="1"/>
</dbReference>
<dbReference type="PROSITE" id="PS51194">
    <property type="entry name" value="HELICASE_CTER"/>
    <property type="match status" value="1"/>
</dbReference>
<dbReference type="PROSITE" id="PS51204">
    <property type="entry name" value="HSA"/>
    <property type="match status" value="1"/>
</dbReference>
<reference key="1">
    <citation type="journal article" date="2004" name="EMBO J.">
        <title>Roles of histone acetylation and chromatin remodeling factor in a meiotic recombination hotspot.</title>
        <authorList>
            <person name="Yamada T."/>
            <person name="Mizuno K."/>
            <person name="Hirota K."/>
            <person name="Kon N."/>
            <person name="Wahls W.P."/>
            <person name="Hartsuiker E."/>
            <person name="Murofushi H."/>
            <person name="Shibata T."/>
            <person name="Ohta K."/>
        </authorList>
    </citation>
    <scope>NUCLEOTIDE SEQUENCE [GENOMIC DNA]</scope>
    <scope>FUNCTION</scope>
</reference>
<reference key="2">
    <citation type="journal article" date="2002" name="Nature">
        <title>The genome sequence of Schizosaccharomyces pombe.</title>
        <authorList>
            <person name="Wood V."/>
            <person name="Gwilliam R."/>
            <person name="Rajandream M.A."/>
            <person name="Lyne M.H."/>
            <person name="Lyne R."/>
            <person name="Stewart A."/>
            <person name="Sgouros J.G."/>
            <person name="Peat N."/>
            <person name="Hayles J."/>
            <person name="Baker S.G."/>
            <person name="Basham D."/>
            <person name="Bowman S."/>
            <person name="Brooks K."/>
            <person name="Brown D."/>
            <person name="Brown S."/>
            <person name="Chillingworth T."/>
            <person name="Churcher C.M."/>
            <person name="Collins M."/>
            <person name="Connor R."/>
            <person name="Cronin A."/>
            <person name="Davis P."/>
            <person name="Feltwell T."/>
            <person name="Fraser A."/>
            <person name="Gentles S."/>
            <person name="Goble A."/>
            <person name="Hamlin N."/>
            <person name="Harris D.E."/>
            <person name="Hidalgo J."/>
            <person name="Hodgson G."/>
            <person name="Holroyd S."/>
            <person name="Hornsby T."/>
            <person name="Howarth S."/>
            <person name="Huckle E.J."/>
            <person name="Hunt S."/>
            <person name="Jagels K."/>
            <person name="James K.D."/>
            <person name="Jones L."/>
            <person name="Jones M."/>
            <person name="Leather S."/>
            <person name="McDonald S."/>
            <person name="McLean J."/>
            <person name="Mooney P."/>
            <person name="Moule S."/>
            <person name="Mungall K.L."/>
            <person name="Murphy L.D."/>
            <person name="Niblett D."/>
            <person name="Odell C."/>
            <person name="Oliver K."/>
            <person name="O'Neil S."/>
            <person name="Pearson D."/>
            <person name="Quail M.A."/>
            <person name="Rabbinowitsch E."/>
            <person name="Rutherford K.M."/>
            <person name="Rutter S."/>
            <person name="Saunders D."/>
            <person name="Seeger K."/>
            <person name="Sharp S."/>
            <person name="Skelton J."/>
            <person name="Simmonds M.N."/>
            <person name="Squares R."/>
            <person name="Squares S."/>
            <person name="Stevens K."/>
            <person name="Taylor K."/>
            <person name="Taylor R.G."/>
            <person name="Tivey A."/>
            <person name="Walsh S.V."/>
            <person name="Warren T."/>
            <person name="Whitehead S."/>
            <person name="Woodward J.R."/>
            <person name="Volckaert G."/>
            <person name="Aert R."/>
            <person name="Robben J."/>
            <person name="Grymonprez B."/>
            <person name="Weltjens I."/>
            <person name="Vanstreels E."/>
            <person name="Rieger M."/>
            <person name="Schaefer M."/>
            <person name="Mueller-Auer S."/>
            <person name="Gabel C."/>
            <person name="Fuchs M."/>
            <person name="Duesterhoeft A."/>
            <person name="Fritzc C."/>
            <person name="Holzer E."/>
            <person name="Moestl D."/>
            <person name="Hilbert H."/>
            <person name="Borzym K."/>
            <person name="Langer I."/>
            <person name="Beck A."/>
            <person name="Lehrach H."/>
            <person name="Reinhardt R."/>
            <person name="Pohl T.M."/>
            <person name="Eger P."/>
            <person name="Zimmermann W."/>
            <person name="Wedler H."/>
            <person name="Wambutt R."/>
            <person name="Purnelle B."/>
            <person name="Goffeau A."/>
            <person name="Cadieu E."/>
            <person name="Dreano S."/>
            <person name="Gloux S."/>
            <person name="Lelaure V."/>
            <person name="Mottier S."/>
            <person name="Galibert F."/>
            <person name="Aves S.J."/>
            <person name="Xiang Z."/>
            <person name="Hunt C."/>
            <person name="Moore K."/>
            <person name="Hurst S.M."/>
            <person name="Lucas M."/>
            <person name="Rochet M."/>
            <person name="Gaillardin C."/>
            <person name="Tallada V.A."/>
            <person name="Garzon A."/>
            <person name="Thode G."/>
            <person name="Daga R.R."/>
            <person name="Cruzado L."/>
            <person name="Jimenez J."/>
            <person name="Sanchez M."/>
            <person name="del Rey F."/>
            <person name="Benito J."/>
            <person name="Dominguez A."/>
            <person name="Revuelta J.L."/>
            <person name="Moreno S."/>
            <person name="Armstrong J."/>
            <person name="Forsburg S.L."/>
            <person name="Cerutti L."/>
            <person name="Lowe T."/>
            <person name="McCombie W.R."/>
            <person name="Paulsen I."/>
            <person name="Potashkin J."/>
            <person name="Shpakovski G.V."/>
            <person name="Ussery D."/>
            <person name="Barrell B.G."/>
            <person name="Nurse P."/>
        </authorList>
    </citation>
    <scope>NUCLEOTIDE SEQUENCE [LARGE SCALE GENOMIC DNA]</scope>
    <source>
        <strain>972 / ATCC 24843</strain>
    </source>
</reference>
<reference key="3">
    <citation type="journal article" date="2006" name="Nat. Biotechnol.">
        <title>ORFeome cloning and global analysis of protein localization in the fission yeast Schizosaccharomyces pombe.</title>
        <authorList>
            <person name="Matsuyama A."/>
            <person name="Arai R."/>
            <person name="Yashiroda Y."/>
            <person name="Shirai A."/>
            <person name="Kamata A."/>
            <person name="Sekido S."/>
            <person name="Kobayashi Y."/>
            <person name="Hashimoto A."/>
            <person name="Hamamoto M."/>
            <person name="Hiraoka Y."/>
            <person name="Horinouchi S."/>
            <person name="Yoshida M."/>
        </authorList>
    </citation>
    <scope>SUBCELLULAR LOCATION [LARGE SCALE ANALYSIS]</scope>
</reference>
<reference key="4">
    <citation type="journal article" date="2008" name="Nat. Struct. Mol. Biol.">
        <title>Fission yeast SWI/SNF and RSC complexes show compositional and functional differences from budding yeast.</title>
        <authorList>
            <person name="Monahan B.J."/>
            <person name="Villen J."/>
            <person name="Marguerat S."/>
            <person name="Baehler J."/>
            <person name="Gygi S.P."/>
            <person name="Winston F."/>
        </authorList>
    </citation>
    <scope>IDENTIFICATION IN THE RSC COMPLEX</scope>
    <scope>FUNCTION OF THE RSC COMPLEX</scope>
    <scope>IDENTIFICATION BY MASS SPECTROMETRY</scope>
</reference>
<sequence length="1199" mass="140089">MRAEKQYTRNEVEETIVRWKKLKESGATEHDNTEYAQLCDVLRSAQSEIEARRDLKGHIKRCFSSVDKNTEKLILKQQVLAYKKLSQNLPAPDDCILSVLLRLSKDEQLLQSIVKQPLQNSKVDGKVRRDFGSCQITPSAKQQRKYLQYQISEDDAIKNRMFRRMSDLESYPAVMRDVAELKDDNERLNLDTIKRNALVELKKLRLIKQQESLRHQVMHCQPHLRTIVNAVERMSCRRPKLVPQATRLTEVLERQQRSDRERRLKQKQCDYLQTVCAHGREINVRTKNAQARAQKANRAVLAYHSHIEKEEQRRAERNAKQRLQALKENDEEAYLKLIDQAKDTRITHLLRQTDHYLDSLAAAVKVQQSQFGESAYDEDMDRRMNPEDDRKIDYYNVAHNIREVVTEQPSILVGGKLKEYQLRGLQWMISLYNNHLNGILADEMGLGKTIQTISLITHLIEKKRQNGPFLVIVPLSTLTNWTMEFERWAPSIVKIVYKGPPQVRKALHPQVRHSNFQVLLTTYEYIIKDRPLLSRIKWIYMIIDEGHRMKNTQSKLTNTLTTYYSSRYRLILTGTPLQNNLPELWALLNFVLPRIFNSIKSFDEWFNTPFANTGGQDKMELTEEESLLVIRRLHKVLRPFLLRRLKKDVEAELPDKVEKVIRCQMSGLQQKLYYQMKKHGMLYVEDAKRGKTGIKGLQNTVMQLKKICNHPFVFEDVERSIDPTGFNYDMLWRVSGKFELLDRILPKLFRSGHRILMFFQMTQIMNIMEDYLHYRQWRYLRLDGSTKADDRSKLLGVFNDPTAEVNLFLLSTRAGGLGLNLQTADTVIIFDSDWNPHQDLQAQDRAHRIGQTKEVRIYRLITEKSVEENILARAQYKLDIDGKVIQAGKFDNKSTPEEREAFLRSLLENENGEEENDEKGELDDDELNEILARGDDELRLFKQMTEDLERESPYGKNKEKERLIQVSELPEFYQREEPEKTTDLLQEEPLGRGARRRTPVVYDEAVRDAQWMAEMDMESEARPTRGRPKRNIASVDETPALTLNGKPKKKRGPAPDTLTSEHRSLLRRVCLEIYKAVNELEDDNGRPLNKLFLELPSKKLYPDYYMIIKSPIALDAIRKHINGTFYKTLEAMKSDLMTMFNNARTYNEEGSFVYEDANKMQTAMETKIEELEEDGTLATLRGMEAEATSQLEDRIENEA</sequence>
<name>SNF21_SCHPO</name>